<dbReference type="EMBL" id="Z70177">
    <property type="protein sequence ID" value="CAA94059.1"/>
    <property type="molecule type" value="Genomic_DNA"/>
</dbReference>
<dbReference type="EMBL" id="AL009126">
    <property type="protein sequence ID" value="CAB13115.1"/>
    <property type="molecule type" value="Genomic_DNA"/>
</dbReference>
<dbReference type="EMBL" id="Z34287">
    <property type="protein sequence ID" value="CAA84048.1"/>
    <property type="molecule type" value="Genomic_DNA"/>
</dbReference>
<dbReference type="PIR" id="A69735">
    <property type="entry name" value="A69735"/>
</dbReference>
<dbReference type="RefSeq" id="NP_389140.1">
    <property type="nucleotide sequence ID" value="NC_000964.3"/>
</dbReference>
<dbReference type="RefSeq" id="WP_003245584.1">
    <property type="nucleotide sequence ID" value="NZ_OZ025638.1"/>
</dbReference>
<dbReference type="SMR" id="P39786"/>
<dbReference type="FunCoup" id="P39786">
    <property type="interactions" value="37"/>
</dbReference>
<dbReference type="STRING" id="224308.BSU12580"/>
<dbReference type="PaxDb" id="224308-BSU12580"/>
<dbReference type="EnsemblBacteria" id="CAB13115">
    <property type="protein sequence ID" value="CAB13115"/>
    <property type="gene ID" value="BSU_12580"/>
</dbReference>
<dbReference type="GeneID" id="939426"/>
<dbReference type="KEGG" id="bsu:BSU12580"/>
<dbReference type="PATRIC" id="fig|224308.179.peg.1362"/>
<dbReference type="eggNOG" id="COG1783">
    <property type="taxonomic scope" value="Bacteria"/>
</dbReference>
<dbReference type="InParanoid" id="P39786"/>
<dbReference type="OrthoDB" id="9768556at2"/>
<dbReference type="PhylomeDB" id="P39786"/>
<dbReference type="BioCyc" id="BSUB:BSU12580-MONOMER"/>
<dbReference type="Proteomes" id="UP000001570">
    <property type="component" value="Chromosome"/>
</dbReference>
<dbReference type="Gene3D" id="3.30.420.280">
    <property type="match status" value="1"/>
</dbReference>
<dbReference type="Gene3D" id="3.40.50.300">
    <property type="entry name" value="P-loop containing nucleotide triphosphate hydrolases"/>
    <property type="match status" value="1"/>
</dbReference>
<dbReference type="InterPro" id="IPR027417">
    <property type="entry name" value="P-loop_NTPase"/>
</dbReference>
<dbReference type="InterPro" id="IPR006437">
    <property type="entry name" value="Phage_terminase_lsu"/>
</dbReference>
<dbReference type="InterPro" id="IPR035413">
    <property type="entry name" value="Terminase_L_C"/>
</dbReference>
<dbReference type="InterPro" id="IPR035412">
    <property type="entry name" value="Terminase_L_N"/>
</dbReference>
<dbReference type="InterPro" id="IPR052380">
    <property type="entry name" value="Viral_DNA_packaging_terminase"/>
</dbReference>
<dbReference type="NCBIfam" id="TIGR01547">
    <property type="entry name" value="phage_term_2"/>
    <property type="match status" value="1"/>
</dbReference>
<dbReference type="PANTHER" id="PTHR39184">
    <property type="match status" value="1"/>
</dbReference>
<dbReference type="PANTHER" id="PTHR39184:SF1">
    <property type="entry name" value="PBSX PHAGE TERMINASE LARGE SUBUNIT"/>
    <property type="match status" value="1"/>
</dbReference>
<dbReference type="Pfam" id="PF04466">
    <property type="entry name" value="Terminase_3"/>
    <property type="match status" value="1"/>
</dbReference>
<dbReference type="Pfam" id="PF17288">
    <property type="entry name" value="Terminase_3C"/>
    <property type="match status" value="1"/>
</dbReference>
<feature type="chain" id="PRO_0000066052" description="PBSX phage terminase large subunit">
    <location>
        <begin position="1"/>
        <end position="433"/>
    </location>
</feature>
<gene>
    <name type="primary">xtmB</name>
    <name type="synonym">ykxG</name>
    <name type="ordered locus">BSU12580</name>
</gene>
<comment type="function">
    <text>Functions as a terminase.</text>
</comment>
<comment type="subunit">
    <text evidence="1">Dimer of a small and a large subunit.</text>
</comment>
<comment type="similarity">
    <text evidence="1">To B.subtilis YqaT and phage SPP1 terminase large subunit.</text>
</comment>
<reference key="1">
    <citation type="submission" date="1996-03" db="EMBL/GenBank/DDBJ databases">
        <authorList>
            <person name="Krogh S."/>
            <person name="O'Reilly M."/>
            <person name="Nolan N."/>
            <person name="Devine K.M."/>
        </authorList>
    </citation>
    <scope>NUCLEOTIDE SEQUENCE [GENOMIC DNA]</scope>
    <source>
        <strain>168</strain>
    </source>
</reference>
<reference key="2">
    <citation type="journal article" date="1997" name="Nature">
        <title>The complete genome sequence of the Gram-positive bacterium Bacillus subtilis.</title>
        <authorList>
            <person name="Kunst F."/>
            <person name="Ogasawara N."/>
            <person name="Moszer I."/>
            <person name="Albertini A.M."/>
            <person name="Alloni G."/>
            <person name="Azevedo V."/>
            <person name="Bertero M.G."/>
            <person name="Bessieres P."/>
            <person name="Bolotin A."/>
            <person name="Borchert S."/>
            <person name="Borriss R."/>
            <person name="Boursier L."/>
            <person name="Brans A."/>
            <person name="Braun M."/>
            <person name="Brignell S.C."/>
            <person name="Bron S."/>
            <person name="Brouillet S."/>
            <person name="Bruschi C.V."/>
            <person name="Caldwell B."/>
            <person name="Capuano V."/>
            <person name="Carter N.M."/>
            <person name="Choi S.-K."/>
            <person name="Codani J.-J."/>
            <person name="Connerton I.F."/>
            <person name="Cummings N.J."/>
            <person name="Daniel R.A."/>
            <person name="Denizot F."/>
            <person name="Devine K.M."/>
            <person name="Duesterhoeft A."/>
            <person name="Ehrlich S.D."/>
            <person name="Emmerson P.T."/>
            <person name="Entian K.-D."/>
            <person name="Errington J."/>
            <person name="Fabret C."/>
            <person name="Ferrari E."/>
            <person name="Foulger D."/>
            <person name="Fritz C."/>
            <person name="Fujita M."/>
            <person name="Fujita Y."/>
            <person name="Fuma S."/>
            <person name="Galizzi A."/>
            <person name="Galleron N."/>
            <person name="Ghim S.-Y."/>
            <person name="Glaser P."/>
            <person name="Goffeau A."/>
            <person name="Golightly E.J."/>
            <person name="Grandi G."/>
            <person name="Guiseppi G."/>
            <person name="Guy B.J."/>
            <person name="Haga K."/>
            <person name="Haiech J."/>
            <person name="Harwood C.R."/>
            <person name="Henaut A."/>
            <person name="Hilbert H."/>
            <person name="Holsappel S."/>
            <person name="Hosono S."/>
            <person name="Hullo M.-F."/>
            <person name="Itaya M."/>
            <person name="Jones L.-M."/>
            <person name="Joris B."/>
            <person name="Karamata D."/>
            <person name="Kasahara Y."/>
            <person name="Klaerr-Blanchard M."/>
            <person name="Klein C."/>
            <person name="Kobayashi Y."/>
            <person name="Koetter P."/>
            <person name="Koningstein G."/>
            <person name="Krogh S."/>
            <person name="Kumano M."/>
            <person name="Kurita K."/>
            <person name="Lapidus A."/>
            <person name="Lardinois S."/>
            <person name="Lauber J."/>
            <person name="Lazarevic V."/>
            <person name="Lee S.-M."/>
            <person name="Levine A."/>
            <person name="Liu H."/>
            <person name="Masuda S."/>
            <person name="Mauel C."/>
            <person name="Medigue C."/>
            <person name="Medina N."/>
            <person name="Mellado R.P."/>
            <person name="Mizuno M."/>
            <person name="Moestl D."/>
            <person name="Nakai S."/>
            <person name="Noback M."/>
            <person name="Noone D."/>
            <person name="O'Reilly M."/>
            <person name="Ogawa K."/>
            <person name="Ogiwara A."/>
            <person name="Oudega B."/>
            <person name="Park S.-H."/>
            <person name="Parro V."/>
            <person name="Pohl T.M."/>
            <person name="Portetelle D."/>
            <person name="Porwollik S."/>
            <person name="Prescott A.M."/>
            <person name="Presecan E."/>
            <person name="Pujic P."/>
            <person name="Purnelle B."/>
            <person name="Rapoport G."/>
            <person name="Rey M."/>
            <person name="Reynolds S."/>
            <person name="Rieger M."/>
            <person name="Rivolta C."/>
            <person name="Rocha E."/>
            <person name="Roche B."/>
            <person name="Rose M."/>
            <person name="Sadaie Y."/>
            <person name="Sato T."/>
            <person name="Scanlan E."/>
            <person name="Schleich S."/>
            <person name="Schroeter R."/>
            <person name="Scoffone F."/>
            <person name="Sekiguchi J."/>
            <person name="Sekowska A."/>
            <person name="Seror S.J."/>
            <person name="Serror P."/>
            <person name="Shin B.-S."/>
            <person name="Soldo B."/>
            <person name="Sorokin A."/>
            <person name="Tacconi E."/>
            <person name="Takagi T."/>
            <person name="Takahashi H."/>
            <person name="Takemaru K."/>
            <person name="Takeuchi M."/>
            <person name="Tamakoshi A."/>
            <person name="Tanaka T."/>
            <person name="Terpstra P."/>
            <person name="Tognoni A."/>
            <person name="Tosato V."/>
            <person name="Uchiyama S."/>
            <person name="Vandenbol M."/>
            <person name="Vannier F."/>
            <person name="Vassarotti A."/>
            <person name="Viari A."/>
            <person name="Wambutt R."/>
            <person name="Wedler E."/>
            <person name="Wedler H."/>
            <person name="Weitzenegger T."/>
            <person name="Winters P."/>
            <person name="Wipat A."/>
            <person name="Yamamoto H."/>
            <person name="Yamane K."/>
            <person name="Yasumoto K."/>
            <person name="Yata K."/>
            <person name="Yoshida K."/>
            <person name="Yoshikawa H.-F."/>
            <person name="Zumstein E."/>
            <person name="Yoshikawa H."/>
            <person name="Danchin A."/>
        </authorList>
    </citation>
    <scope>NUCLEOTIDE SEQUENCE [LARGE SCALE GENOMIC DNA]</scope>
    <source>
        <strain>168</strain>
    </source>
</reference>
<reference key="3">
    <citation type="journal article" date="1994" name="J. Bacteriol.">
        <title>Genetic control of bacterial suicide: regulation of the induction of PBSX in Bacillus subtilis.</title>
        <authorList>
            <person name="McDonnell G.E."/>
            <person name="Wood H."/>
            <person name="Devine K.M."/>
            <person name="McConnell D.J."/>
        </authorList>
    </citation>
    <scope>NUCLEOTIDE SEQUENCE [GENOMIC DNA] OF 1-76</scope>
    <source>
        <strain>168 / SO113</strain>
    </source>
</reference>
<protein>
    <recommendedName>
        <fullName>PBSX phage terminase large subunit</fullName>
    </recommendedName>
</protein>
<organism>
    <name type="scientific">Bacillus subtilis (strain 168)</name>
    <dbReference type="NCBI Taxonomy" id="224308"/>
    <lineage>
        <taxon>Bacteria</taxon>
        <taxon>Bacillati</taxon>
        <taxon>Bacillota</taxon>
        <taxon>Bacilli</taxon>
        <taxon>Bacillales</taxon>
        <taxon>Bacillaceae</taxon>
        <taxon>Bacillus</taxon>
    </lineage>
</organism>
<proteinExistence type="predicted"/>
<keyword id="KW-1185">Reference proteome</keyword>
<keyword id="KW-0231">Viral genome packaging</keyword>
<keyword id="KW-1188">Viral release from host cell</keyword>
<name>XTMB_BACSU</name>
<sequence>MIVKEINPHFEDYVFNWEQTYQFLVGGYGSSKSYHTALKIVLKLLKEKRTALVIREVFDTHRDSTFALFQEVIEELGLTKAVASLSSPLQLRFHNGSRIMFKGMDNPAKLKSVHNISLIWIEECSEVKYEGFKELIGRLRHPELKLHMICTTNPVGTSNWTYRHFFRDERKKRFVLDDSELYEKRTIVKGDTYYHHSTANDNLFLPESYVKQLDGLKEYDPDLYRIARKGRFGVNGIRVLPQFEVLPHDQVKKCIAAISKPIFRTGMDFGFEESYNAVVRLAVDPEKKYLYIYWEYYQNKMTDDRTAEELREFIETQELIKADSAEPKSIQYFRQQGFRMVGARKFPGSRLQYTKKVKRFKKIFCSDRCENVIYELETLTYAKDKNGALIEDEFTIDPHTLSAIWYALDDYEVADMKETAHKRMRPNRERRRS</sequence>
<evidence type="ECO:0000305" key="1"/>
<accession>P39786</accession>